<reference key="1">
    <citation type="journal article" date="2011" name="J. Bacteriol.">
        <title>Comparative genomics of 28 Salmonella enterica isolates: evidence for CRISPR-mediated adaptive sublineage evolution.</title>
        <authorList>
            <person name="Fricke W.F."/>
            <person name="Mammel M.K."/>
            <person name="McDermott P.F."/>
            <person name="Tartera C."/>
            <person name="White D.G."/>
            <person name="Leclerc J.E."/>
            <person name="Ravel J."/>
            <person name="Cebula T.A."/>
        </authorList>
    </citation>
    <scope>NUCLEOTIDE SEQUENCE [LARGE SCALE GENOMIC DNA]</scope>
    <source>
        <strain>CVM19633</strain>
    </source>
</reference>
<name>PDXB_SALSV</name>
<evidence type="ECO:0000255" key="1">
    <source>
        <dbReference type="HAMAP-Rule" id="MF_01825"/>
    </source>
</evidence>
<keyword id="KW-0963">Cytoplasm</keyword>
<keyword id="KW-0520">NAD</keyword>
<keyword id="KW-0560">Oxidoreductase</keyword>
<keyword id="KW-0664">Pyridoxine biosynthesis</keyword>
<dbReference type="EC" id="1.1.1.290" evidence="1"/>
<dbReference type="EMBL" id="CP001127">
    <property type="protein sequence ID" value="ACF91289.1"/>
    <property type="molecule type" value="Genomic_DNA"/>
</dbReference>
<dbReference type="RefSeq" id="WP_000699176.1">
    <property type="nucleotide sequence ID" value="NC_011094.1"/>
</dbReference>
<dbReference type="SMR" id="B4TQA6"/>
<dbReference type="KEGG" id="sew:SeSA_A2600"/>
<dbReference type="HOGENOM" id="CLU_019796_4_0_6"/>
<dbReference type="UniPathway" id="UPA00244">
    <property type="reaction ID" value="UER00310"/>
</dbReference>
<dbReference type="Proteomes" id="UP000001865">
    <property type="component" value="Chromosome"/>
</dbReference>
<dbReference type="GO" id="GO:0005829">
    <property type="term" value="C:cytosol"/>
    <property type="evidence" value="ECO:0007669"/>
    <property type="project" value="TreeGrafter"/>
</dbReference>
<dbReference type="GO" id="GO:0033711">
    <property type="term" value="F:4-phosphoerythronate dehydrogenase activity"/>
    <property type="evidence" value="ECO:0007669"/>
    <property type="project" value="UniProtKB-EC"/>
</dbReference>
<dbReference type="GO" id="GO:0051287">
    <property type="term" value="F:NAD binding"/>
    <property type="evidence" value="ECO:0007669"/>
    <property type="project" value="InterPro"/>
</dbReference>
<dbReference type="GO" id="GO:0046983">
    <property type="term" value="F:protein dimerization activity"/>
    <property type="evidence" value="ECO:0007669"/>
    <property type="project" value="InterPro"/>
</dbReference>
<dbReference type="GO" id="GO:0036001">
    <property type="term" value="P:'de novo' pyridoxal 5'-phosphate biosynthetic process"/>
    <property type="evidence" value="ECO:0007669"/>
    <property type="project" value="TreeGrafter"/>
</dbReference>
<dbReference type="GO" id="GO:0008615">
    <property type="term" value="P:pyridoxine biosynthetic process"/>
    <property type="evidence" value="ECO:0007669"/>
    <property type="project" value="UniProtKB-UniRule"/>
</dbReference>
<dbReference type="CDD" id="cd12158">
    <property type="entry name" value="ErythrP_dh"/>
    <property type="match status" value="1"/>
</dbReference>
<dbReference type="FunFam" id="3.30.1370.170:FF:000001">
    <property type="entry name" value="Erythronate-4-phosphate dehydrogenase"/>
    <property type="match status" value="1"/>
</dbReference>
<dbReference type="FunFam" id="3.40.50.720:FF:000093">
    <property type="entry name" value="Erythronate-4-phosphate dehydrogenase"/>
    <property type="match status" value="1"/>
</dbReference>
<dbReference type="Gene3D" id="3.30.1370.170">
    <property type="match status" value="1"/>
</dbReference>
<dbReference type="Gene3D" id="3.40.50.720">
    <property type="entry name" value="NAD(P)-binding Rossmann-like Domain"/>
    <property type="match status" value="2"/>
</dbReference>
<dbReference type="HAMAP" id="MF_01825">
    <property type="entry name" value="PdxB"/>
    <property type="match status" value="1"/>
</dbReference>
<dbReference type="InterPro" id="IPR006139">
    <property type="entry name" value="D-isomer_2_OHA_DH_cat_dom"/>
</dbReference>
<dbReference type="InterPro" id="IPR029753">
    <property type="entry name" value="D-isomer_DH_CS"/>
</dbReference>
<dbReference type="InterPro" id="IPR029752">
    <property type="entry name" value="D-isomer_DH_CS1"/>
</dbReference>
<dbReference type="InterPro" id="IPR006140">
    <property type="entry name" value="D-isomer_DH_NAD-bd"/>
</dbReference>
<dbReference type="InterPro" id="IPR020921">
    <property type="entry name" value="Erythronate-4-P_DHase"/>
</dbReference>
<dbReference type="InterPro" id="IPR024531">
    <property type="entry name" value="Erythronate-4-P_DHase_dimer"/>
</dbReference>
<dbReference type="InterPro" id="IPR036291">
    <property type="entry name" value="NAD(P)-bd_dom_sf"/>
</dbReference>
<dbReference type="InterPro" id="IPR038251">
    <property type="entry name" value="PdxB_dimer_sf"/>
</dbReference>
<dbReference type="NCBIfam" id="NF001309">
    <property type="entry name" value="PRK00257.1"/>
    <property type="match status" value="1"/>
</dbReference>
<dbReference type="NCBIfam" id="NF011966">
    <property type="entry name" value="PRK15438.1"/>
    <property type="match status" value="1"/>
</dbReference>
<dbReference type="PANTHER" id="PTHR42938">
    <property type="entry name" value="FORMATE DEHYDROGENASE 1"/>
    <property type="match status" value="1"/>
</dbReference>
<dbReference type="PANTHER" id="PTHR42938:SF9">
    <property type="entry name" value="FORMATE DEHYDROGENASE 1"/>
    <property type="match status" value="1"/>
</dbReference>
<dbReference type="Pfam" id="PF00389">
    <property type="entry name" value="2-Hacid_dh"/>
    <property type="match status" value="1"/>
</dbReference>
<dbReference type="Pfam" id="PF02826">
    <property type="entry name" value="2-Hacid_dh_C"/>
    <property type="match status" value="1"/>
</dbReference>
<dbReference type="Pfam" id="PF11890">
    <property type="entry name" value="DUF3410"/>
    <property type="match status" value="1"/>
</dbReference>
<dbReference type="SUPFAM" id="SSF52283">
    <property type="entry name" value="Formate/glycerate dehydrogenase catalytic domain-like"/>
    <property type="match status" value="1"/>
</dbReference>
<dbReference type="SUPFAM" id="SSF51735">
    <property type="entry name" value="NAD(P)-binding Rossmann-fold domains"/>
    <property type="match status" value="1"/>
</dbReference>
<dbReference type="PROSITE" id="PS00065">
    <property type="entry name" value="D_2_HYDROXYACID_DH_1"/>
    <property type="match status" value="1"/>
</dbReference>
<dbReference type="PROSITE" id="PS00671">
    <property type="entry name" value="D_2_HYDROXYACID_DH_3"/>
    <property type="match status" value="1"/>
</dbReference>
<feature type="chain" id="PRO_1000188282" description="Erythronate-4-phosphate dehydrogenase">
    <location>
        <begin position="1"/>
        <end position="378"/>
    </location>
</feature>
<feature type="active site" evidence="1">
    <location>
        <position position="208"/>
    </location>
</feature>
<feature type="active site" evidence="1">
    <location>
        <position position="237"/>
    </location>
</feature>
<feature type="active site" description="Proton donor" evidence="1">
    <location>
        <position position="254"/>
    </location>
</feature>
<feature type="binding site" evidence="1">
    <location>
        <position position="45"/>
    </location>
    <ligand>
        <name>substrate</name>
    </ligand>
</feature>
<feature type="binding site" evidence="1">
    <location>
        <position position="66"/>
    </location>
    <ligand>
        <name>substrate</name>
    </ligand>
</feature>
<feature type="binding site" evidence="1">
    <location>
        <position position="146"/>
    </location>
    <ligand>
        <name>NAD(+)</name>
        <dbReference type="ChEBI" id="CHEBI:57540"/>
    </ligand>
</feature>
<feature type="binding site" evidence="1">
    <location>
        <position position="175"/>
    </location>
    <ligand>
        <name>NAD(+)</name>
        <dbReference type="ChEBI" id="CHEBI:57540"/>
    </ligand>
</feature>
<feature type="binding site" evidence="1">
    <location>
        <position position="232"/>
    </location>
    <ligand>
        <name>NAD(+)</name>
        <dbReference type="ChEBI" id="CHEBI:57540"/>
    </ligand>
</feature>
<feature type="binding site" evidence="1">
    <location>
        <position position="257"/>
    </location>
    <ligand>
        <name>NAD(+)</name>
        <dbReference type="ChEBI" id="CHEBI:57540"/>
    </ligand>
</feature>
<feature type="binding site" evidence="1">
    <location>
        <position position="258"/>
    </location>
    <ligand>
        <name>substrate</name>
    </ligand>
</feature>
<proteinExistence type="inferred from homology"/>
<organism>
    <name type="scientific">Salmonella schwarzengrund (strain CVM19633)</name>
    <dbReference type="NCBI Taxonomy" id="439843"/>
    <lineage>
        <taxon>Bacteria</taxon>
        <taxon>Pseudomonadati</taxon>
        <taxon>Pseudomonadota</taxon>
        <taxon>Gammaproteobacteria</taxon>
        <taxon>Enterobacterales</taxon>
        <taxon>Enterobacteriaceae</taxon>
        <taxon>Salmonella</taxon>
    </lineage>
</organism>
<comment type="function">
    <text evidence="1">Catalyzes the oxidation of erythronate-4-phosphate to 3-hydroxy-2-oxo-4-phosphonooxybutanoate.</text>
</comment>
<comment type="catalytic activity">
    <reaction evidence="1">
        <text>4-phospho-D-erythronate + NAD(+) = (R)-3-hydroxy-2-oxo-4-phosphooxybutanoate + NADH + H(+)</text>
        <dbReference type="Rhea" id="RHEA:18829"/>
        <dbReference type="ChEBI" id="CHEBI:15378"/>
        <dbReference type="ChEBI" id="CHEBI:57540"/>
        <dbReference type="ChEBI" id="CHEBI:57945"/>
        <dbReference type="ChEBI" id="CHEBI:58538"/>
        <dbReference type="ChEBI" id="CHEBI:58766"/>
        <dbReference type="EC" id="1.1.1.290"/>
    </reaction>
</comment>
<comment type="pathway">
    <text evidence="1">Cofactor biosynthesis; pyridoxine 5'-phosphate biosynthesis; pyridoxine 5'-phosphate from D-erythrose 4-phosphate: step 2/5.</text>
</comment>
<comment type="subunit">
    <text evidence="1">Homodimer.</text>
</comment>
<comment type="subcellular location">
    <subcellularLocation>
        <location evidence="1">Cytoplasm</location>
    </subcellularLocation>
</comment>
<comment type="similarity">
    <text evidence="1">Belongs to the D-isomer specific 2-hydroxyacid dehydrogenase family. PdxB subfamily.</text>
</comment>
<protein>
    <recommendedName>
        <fullName evidence="1">Erythronate-4-phosphate dehydrogenase</fullName>
        <ecNumber evidence="1">1.1.1.290</ecNumber>
    </recommendedName>
</protein>
<sequence length="378" mass="41279">MKILVDENMPYARELFSRLGEVKAVPGRPIPVEELNHADALMVRSVTKVNESLLSGTPINFVGTATAGTDHVDEAWLKQAGIGFSAAPGCNAIAVVEYVFSALLMLAERDGFSLRDRTIGIVGVGNVGSRLQTRLEALGIRTLLCDPPRAARGDEGDFRTLDELVQEADVLTFHTPLYKDGPYKTLHLADETLIRRLKPGAILINACRGPVVDNAALLARLNAGQPLSVVLDVWEGEPDLNVALLEAVDIGTSHIAGYTLEGKARGTTQVFEAYSAFIGREQHVALETLLPAPEFGRITLHGPLDQPTLKRLAHLVYDVRRDDAPLRKVAGIPGEFDKLRKNYLERREWSSLYVMCDDETAAALLCKLGFNAVHHPAH</sequence>
<accession>B4TQA6</accession>
<gene>
    <name evidence="1" type="primary">pdxB</name>
    <name type="ordered locus">SeSA_A2600</name>
</gene>